<accession>Q82WI6</accession>
<organism>
    <name type="scientific">Nitrosomonas europaea (strain ATCC 19718 / CIP 103999 / KCTC 2705 / NBRC 14298)</name>
    <dbReference type="NCBI Taxonomy" id="228410"/>
    <lineage>
        <taxon>Bacteria</taxon>
        <taxon>Pseudomonadati</taxon>
        <taxon>Pseudomonadota</taxon>
        <taxon>Betaproteobacteria</taxon>
        <taxon>Nitrosomonadales</taxon>
        <taxon>Nitrosomonadaceae</taxon>
        <taxon>Nitrosomonas</taxon>
    </lineage>
</organism>
<keyword id="KW-0028">Amino-acid biosynthesis</keyword>
<keyword id="KW-0100">Branched-chain amino acid biosynthesis</keyword>
<keyword id="KW-0963">Cytoplasm</keyword>
<keyword id="KW-0432">Leucine biosynthesis</keyword>
<keyword id="KW-0460">Magnesium</keyword>
<keyword id="KW-0464">Manganese</keyword>
<keyword id="KW-0479">Metal-binding</keyword>
<keyword id="KW-0520">NAD</keyword>
<keyword id="KW-0560">Oxidoreductase</keyword>
<keyword id="KW-1185">Reference proteome</keyword>
<sequence>MKIALLAGDGIGPEIMAQAERVLRYFQQEGLQIELEPGLLGGCAVDATGEPFPEATRQLAIEADAILLGAVGGTQYDGLPREKRPEQGLLAIRKELNLFANLRPVVLYPELSNASTLKPEVVAGLDILIVRELTGDIYFGRPRGIEYRDGQKVGFNTMIYSESEIRRIAHVAFQAAGRRNGRLCSVDKMNVLECTQLWRDVVTETAQSYPDVTLSHMLVDNAAMQLVRNPRQFDVVVTGNMFGDILSDEASMLTGSIGMLPSASLDDRNKGLYEPIHGSAPDIAGKGIANPLATILSAAMMLRYSFNQETAASRIEHAVQKTLQQSYRTEDIYEAGMKKVGTVEMGDRVLANLQSR</sequence>
<gene>
    <name evidence="1" type="primary">leuB</name>
    <name type="ordered locus">NE0688</name>
</gene>
<proteinExistence type="inferred from homology"/>
<protein>
    <recommendedName>
        <fullName evidence="1">3-isopropylmalate dehydrogenase</fullName>
        <ecNumber evidence="1">1.1.1.85</ecNumber>
    </recommendedName>
    <alternativeName>
        <fullName evidence="1">3-IPM-DH</fullName>
    </alternativeName>
    <alternativeName>
        <fullName evidence="1">Beta-IPM dehydrogenase</fullName>
        <shortName evidence="1">IMDH</shortName>
    </alternativeName>
</protein>
<reference key="1">
    <citation type="journal article" date="2003" name="J. Bacteriol.">
        <title>Complete genome sequence of the ammonia-oxidizing bacterium and obligate chemolithoautotroph Nitrosomonas europaea.</title>
        <authorList>
            <person name="Chain P."/>
            <person name="Lamerdin J.E."/>
            <person name="Larimer F.W."/>
            <person name="Regala W."/>
            <person name="Lao V."/>
            <person name="Land M.L."/>
            <person name="Hauser L."/>
            <person name="Hooper A.B."/>
            <person name="Klotz M.G."/>
            <person name="Norton J."/>
            <person name="Sayavedra-Soto L.A."/>
            <person name="Arciero D.M."/>
            <person name="Hommes N.G."/>
            <person name="Whittaker M.M."/>
            <person name="Arp D.J."/>
        </authorList>
    </citation>
    <scope>NUCLEOTIDE SEQUENCE [LARGE SCALE GENOMIC DNA]</scope>
    <source>
        <strain>ATCC 19718 / CIP 103999 / KCTC 2705 / NBRC 14298</strain>
    </source>
</reference>
<dbReference type="EC" id="1.1.1.85" evidence="1"/>
<dbReference type="EMBL" id="AL954747">
    <property type="protein sequence ID" value="CAD84599.1"/>
    <property type="molecule type" value="Genomic_DNA"/>
</dbReference>
<dbReference type="RefSeq" id="WP_011111309.1">
    <property type="nucleotide sequence ID" value="NC_004757.1"/>
</dbReference>
<dbReference type="SMR" id="Q82WI6"/>
<dbReference type="STRING" id="228410.NE0688"/>
<dbReference type="GeneID" id="87103883"/>
<dbReference type="KEGG" id="neu:NE0688"/>
<dbReference type="eggNOG" id="COG0473">
    <property type="taxonomic scope" value="Bacteria"/>
</dbReference>
<dbReference type="HOGENOM" id="CLU_031953_0_3_4"/>
<dbReference type="OrthoDB" id="5289857at2"/>
<dbReference type="PhylomeDB" id="Q82WI6"/>
<dbReference type="UniPathway" id="UPA00048">
    <property type="reaction ID" value="UER00072"/>
</dbReference>
<dbReference type="Proteomes" id="UP000001416">
    <property type="component" value="Chromosome"/>
</dbReference>
<dbReference type="GO" id="GO:0005829">
    <property type="term" value="C:cytosol"/>
    <property type="evidence" value="ECO:0007669"/>
    <property type="project" value="TreeGrafter"/>
</dbReference>
<dbReference type="GO" id="GO:0003862">
    <property type="term" value="F:3-isopropylmalate dehydrogenase activity"/>
    <property type="evidence" value="ECO:0007669"/>
    <property type="project" value="UniProtKB-UniRule"/>
</dbReference>
<dbReference type="GO" id="GO:0000287">
    <property type="term" value="F:magnesium ion binding"/>
    <property type="evidence" value="ECO:0007669"/>
    <property type="project" value="InterPro"/>
</dbReference>
<dbReference type="GO" id="GO:0051287">
    <property type="term" value="F:NAD binding"/>
    <property type="evidence" value="ECO:0007669"/>
    <property type="project" value="InterPro"/>
</dbReference>
<dbReference type="GO" id="GO:0009098">
    <property type="term" value="P:L-leucine biosynthetic process"/>
    <property type="evidence" value="ECO:0007669"/>
    <property type="project" value="UniProtKB-UniRule"/>
</dbReference>
<dbReference type="FunFam" id="3.40.718.10:FF:000028">
    <property type="entry name" value="3-isopropylmalate dehydrogenase"/>
    <property type="match status" value="1"/>
</dbReference>
<dbReference type="Gene3D" id="3.40.718.10">
    <property type="entry name" value="Isopropylmalate Dehydrogenase"/>
    <property type="match status" value="1"/>
</dbReference>
<dbReference type="HAMAP" id="MF_01033">
    <property type="entry name" value="LeuB_type1"/>
    <property type="match status" value="1"/>
</dbReference>
<dbReference type="InterPro" id="IPR019818">
    <property type="entry name" value="IsoCit/isopropylmalate_DH_CS"/>
</dbReference>
<dbReference type="InterPro" id="IPR024084">
    <property type="entry name" value="IsoPropMal-DH-like_dom"/>
</dbReference>
<dbReference type="InterPro" id="IPR004429">
    <property type="entry name" value="Isopropylmalate_DH"/>
</dbReference>
<dbReference type="NCBIfam" id="TIGR00169">
    <property type="entry name" value="leuB"/>
    <property type="match status" value="1"/>
</dbReference>
<dbReference type="PANTHER" id="PTHR42979">
    <property type="entry name" value="3-ISOPROPYLMALATE DEHYDROGENASE"/>
    <property type="match status" value="1"/>
</dbReference>
<dbReference type="PANTHER" id="PTHR42979:SF1">
    <property type="entry name" value="3-ISOPROPYLMALATE DEHYDROGENASE"/>
    <property type="match status" value="1"/>
</dbReference>
<dbReference type="Pfam" id="PF00180">
    <property type="entry name" value="Iso_dh"/>
    <property type="match status" value="1"/>
</dbReference>
<dbReference type="SMART" id="SM01329">
    <property type="entry name" value="Iso_dh"/>
    <property type="match status" value="1"/>
</dbReference>
<dbReference type="SUPFAM" id="SSF53659">
    <property type="entry name" value="Isocitrate/Isopropylmalate dehydrogenase-like"/>
    <property type="match status" value="1"/>
</dbReference>
<dbReference type="PROSITE" id="PS00470">
    <property type="entry name" value="IDH_IMDH"/>
    <property type="match status" value="1"/>
</dbReference>
<comment type="function">
    <text evidence="1">Catalyzes the oxidation of 3-carboxy-2-hydroxy-4-methylpentanoate (3-isopropylmalate) to 3-carboxy-4-methyl-2-oxopentanoate. The product decarboxylates to 4-methyl-2 oxopentanoate.</text>
</comment>
<comment type="catalytic activity">
    <reaction evidence="1">
        <text>(2R,3S)-3-isopropylmalate + NAD(+) = 4-methyl-2-oxopentanoate + CO2 + NADH</text>
        <dbReference type="Rhea" id="RHEA:32271"/>
        <dbReference type="ChEBI" id="CHEBI:16526"/>
        <dbReference type="ChEBI" id="CHEBI:17865"/>
        <dbReference type="ChEBI" id="CHEBI:35121"/>
        <dbReference type="ChEBI" id="CHEBI:57540"/>
        <dbReference type="ChEBI" id="CHEBI:57945"/>
        <dbReference type="EC" id="1.1.1.85"/>
    </reaction>
</comment>
<comment type="cofactor">
    <cofactor evidence="1">
        <name>Mg(2+)</name>
        <dbReference type="ChEBI" id="CHEBI:18420"/>
    </cofactor>
    <cofactor evidence="1">
        <name>Mn(2+)</name>
        <dbReference type="ChEBI" id="CHEBI:29035"/>
    </cofactor>
    <text evidence="1">Binds 1 Mg(2+) or Mn(2+) ion per subunit.</text>
</comment>
<comment type="pathway">
    <text evidence="1">Amino-acid biosynthesis; L-leucine biosynthesis; L-leucine from 3-methyl-2-oxobutanoate: step 3/4.</text>
</comment>
<comment type="subunit">
    <text evidence="1">Homodimer.</text>
</comment>
<comment type="subcellular location">
    <subcellularLocation>
        <location evidence="1">Cytoplasm</location>
    </subcellularLocation>
</comment>
<comment type="similarity">
    <text evidence="1">Belongs to the isocitrate and isopropylmalate dehydrogenases family. LeuB type 1 subfamily.</text>
</comment>
<feature type="chain" id="PRO_0000083715" description="3-isopropylmalate dehydrogenase">
    <location>
        <begin position="1"/>
        <end position="356"/>
    </location>
</feature>
<feature type="binding site" evidence="1">
    <location>
        <begin position="73"/>
        <end position="86"/>
    </location>
    <ligand>
        <name>NAD(+)</name>
        <dbReference type="ChEBI" id="CHEBI:57540"/>
    </ligand>
</feature>
<feature type="binding site" evidence="1">
    <location>
        <position position="93"/>
    </location>
    <ligand>
        <name>substrate</name>
    </ligand>
</feature>
<feature type="binding site" evidence="1">
    <location>
        <position position="103"/>
    </location>
    <ligand>
        <name>substrate</name>
    </ligand>
</feature>
<feature type="binding site" evidence="1">
    <location>
        <position position="131"/>
    </location>
    <ligand>
        <name>substrate</name>
    </ligand>
</feature>
<feature type="binding site" evidence="1">
    <location>
        <position position="220"/>
    </location>
    <ligand>
        <name>Mg(2+)</name>
        <dbReference type="ChEBI" id="CHEBI:18420"/>
    </ligand>
</feature>
<feature type="binding site" evidence="1">
    <location>
        <position position="220"/>
    </location>
    <ligand>
        <name>substrate</name>
    </ligand>
</feature>
<feature type="binding site" evidence="1">
    <location>
        <position position="244"/>
    </location>
    <ligand>
        <name>Mg(2+)</name>
        <dbReference type="ChEBI" id="CHEBI:18420"/>
    </ligand>
</feature>
<feature type="binding site" evidence="1">
    <location>
        <position position="248"/>
    </location>
    <ligand>
        <name>Mg(2+)</name>
        <dbReference type="ChEBI" id="CHEBI:18420"/>
    </ligand>
</feature>
<feature type="binding site" evidence="1">
    <location>
        <begin position="278"/>
        <end position="290"/>
    </location>
    <ligand>
        <name>NAD(+)</name>
        <dbReference type="ChEBI" id="CHEBI:57540"/>
    </ligand>
</feature>
<feature type="site" description="Important for catalysis" evidence="1">
    <location>
        <position position="138"/>
    </location>
</feature>
<feature type="site" description="Important for catalysis" evidence="1">
    <location>
        <position position="188"/>
    </location>
</feature>
<name>LEU3_NITEU</name>
<evidence type="ECO:0000255" key="1">
    <source>
        <dbReference type="HAMAP-Rule" id="MF_01033"/>
    </source>
</evidence>